<dbReference type="EC" id="1.-.-.-" evidence="13"/>
<dbReference type="EMBL" id="HG792016">
    <property type="protein sequence ID" value="CDM31325.1"/>
    <property type="molecule type" value="Genomic_DNA"/>
</dbReference>
<dbReference type="SMR" id="W6Q4S4"/>
<dbReference type="STRING" id="1365484.W6Q4S4"/>
<dbReference type="GlyCosmos" id="W6Q4S4">
    <property type="glycosylation" value="2 sites, No reported glycans"/>
</dbReference>
<dbReference type="OMA" id="NLAWIEL"/>
<dbReference type="OrthoDB" id="1470350at2759"/>
<dbReference type="Proteomes" id="UP000030686">
    <property type="component" value="Unassembled WGS sequence"/>
</dbReference>
<dbReference type="GO" id="GO:0016020">
    <property type="term" value="C:membrane"/>
    <property type="evidence" value="ECO:0007669"/>
    <property type="project" value="UniProtKB-SubCell"/>
</dbReference>
<dbReference type="GO" id="GO:0020037">
    <property type="term" value="F:heme binding"/>
    <property type="evidence" value="ECO:0007669"/>
    <property type="project" value="InterPro"/>
</dbReference>
<dbReference type="GO" id="GO:0005506">
    <property type="term" value="F:iron ion binding"/>
    <property type="evidence" value="ECO:0007669"/>
    <property type="project" value="InterPro"/>
</dbReference>
<dbReference type="GO" id="GO:0004497">
    <property type="term" value="F:monooxygenase activity"/>
    <property type="evidence" value="ECO:0007669"/>
    <property type="project" value="UniProtKB-KW"/>
</dbReference>
<dbReference type="GO" id="GO:0016705">
    <property type="term" value="F:oxidoreductase activity, acting on paired donors, with incorporation or reduction of molecular oxygen"/>
    <property type="evidence" value="ECO:0007669"/>
    <property type="project" value="InterPro"/>
</dbReference>
<dbReference type="GO" id="GO:0043386">
    <property type="term" value="P:mycotoxin biosynthetic process"/>
    <property type="evidence" value="ECO:0007669"/>
    <property type="project" value="UniProtKB-ARBA"/>
</dbReference>
<dbReference type="CDD" id="cd11058">
    <property type="entry name" value="CYP60B-like"/>
    <property type="match status" value="1"/>
</dbReference>
<dbReference type="Gene3D" id="1.10.630.10">
    <property type="entry name" value="Cytochrome P450"/>
    <property type="match status" value="1"/>
</dbReference>
<dbReference type="InterPro" id="IPR001128">
    <property type="entry name" value="Cyt_P450"/>
</dbReference>
<dbReference type="InterPro" id="IPR017972">
    <property type="entry name" value="Cyt_P450_CS"/>
</dbReference>
<dbReference type="InterPro" id="IPR002401">
    <property type="entry name" value="Cyt_P450_E_grp-I"/>
</dbReference>
<dbReference type="InterPro" id="IPR036396">
    <property type="entry name" value="Cyt_P450_sf"/>
</dbReference>
<dbReference type="InterPro" id="IPR050121">
    <property type="entry name" value="Cytochrome_P450_monoxygenase"/>
</dbReference>
<dbReference type="PANTHER" id="PTHR24305">
    <property type="entry name" value="CYTOCHROME P450"/>
    <property type="match status" value="1"/>
</dbReference>
<dbReference type="PANTHER" id="PTHR24305:SF161">
    <property type="entry name" value="P450, PUTATIVE (EUROFUNG)-RELATED"/>
    <property type="match status" value="1"/>
</dbReference>
<dbReference type="Pfam" id="PF00067">
    <property type="entry name" value="p450"/>
    <property type="match status" value="1"/>
</dbReference>
<dbReference type="PRINTS" id="PR00463">
    <property type="entry name" value="EP450I"/>
</dbReference>
<dbReference type="PRINTS" id="PR00385">
    <property type="entry name" value="P450"/>
</dbReference>
<dbReference type="SUPFAM" id="SSF48264">
    <property type="entry name" value="Cytochrome P450"/>
    <property type="match status" value="1"/>
</dbReference>
<dbReference type="PROSITE" id="PS00086">
    <property type="entry name" value="CYTOCHROME_P450"/>
    <property type="match status" value="1"/>
</dbReference>
<name>ORF11_PENRF</name>
<comment type="function">
    <text evidence="4 5 6 7 8 9">Cytochrome P450 monooxygenase; part of the gene cluster that mediates the biosynthesis of PR-toxin, a bicyclic sesquiterpene belonging to the eremophilane class and acting as a mycotoxin (PubMed:24239699, PubMed:27921136). The first step of the pathway is catalyzed by the aristolochene synthase which performs the cyclization of trans,trans-farnesyl diphosphate (FPP) to the bicyclic sesquiterpene aristolochene (PubMed:15186158, PubMed:24239699, PubMed:8440737). Following the formation of aristolochene, the non-oxygenated aristolochene is converted to the trioxygenated intermediate eremofortin B, via 7-epi-neopetasone (PubMed:24239699, PubMed:26274339). This conversion appears to involve three enzymes, a hydroxysterol oxidase-like enzyme, the quinone-oxidase prx3 that forms the quinone-type-structure in the bicyclic nucleus of aristolochene with the C8-oxo group and the C-3 hydroxyl group, and the P450 monooxygenase ORF6 that introduces the epoxide at the double bond between carbons 1 and 2 (PubMed:24239699, PubMed:27921136). No monoxy or dioxy-intermediates have been reported to be released to the broth, so these three early oxidative reactions may be coupled together (PubMed:24239699). Eremofortin B is further oxidized by another P450 monooxygenase, that introduces a second epoxide between carbons 7 and 11 prior to acetylation to eremofortin A by the acetyltransferase ORF8 (PubMed:16345540, PubMed:24239699, PubMed:27921136). The second epoxidation may be performed by a second P450 monooxygenase (PubMed:24239699). After the acetylation step, eremofortin A is converted to eremofortin C and then to PR-toxin (PubMed:24239699). First the conversion of eremofortin A to eremofortin C proceeds by oxidation of the side chain of the molecule at C-12 and is catalyzed by the short-chain oxidoreductase prx1 (PubMed:16345540, PubMed:24239699). The cytochrome P450 monooxygenase ORF6 is probably also involved in this step (PubMed:27921136). The primary alcohol formed at C-12 is finally oxidized by the short-chain alcohol dehydrogenase prx4 that forms PR-toxin (PubMed:16345540, PubMed:24239699).</text>
</comment>
<comment type="cofactor">
    <cofactor evidence="1">
        <name>heme</name>
        <dbReference type="ChEBI" id="CHEBI:30413"/>
    </cofactor>
</comment>
<comment type="pathway">
    <text evidence="12 13">Sesquiterpene biosynthesis.</text>
</comment>
<comment type="subcellular location">
    <subcellularLocation>
        <location evidence="2">Membrane</location>
        <topology evidence="2">Single-pass membrane protein</topology>
    </subcellularLocation>
</comment>
<comment type="similarity">
    <text evidence="11">Belongs to the cytochrome P450 family.</text>
</comment>
<evidence type="ECO:0000250" key="1">
    <source>
        <dbReference type="UniProtKB" id="P04798"/>
    </source>
</evidence>
<evidence type="ECO:0000255" key="2"/>
<evidence type="ECO:0000255" key="3">
    <source>
        <dbReference type="PROSITE-ProRule" id="PRU00498"/>
    </source>
</evidence>
<evidence type="ECO:0000269" key="4">
    <source>
    </source>
</evidence>
<evidence type="ECO:0000269" key="5">
    <source>
    </source>
</evidence>
<evidence type="ECO:0000269" key="6">
    <source>
    </source>
</evidence>
<evidence type="ECO:0000269" key="7">
    <source>
    </source>
</evidence>
<evidence type="ECO:0000269" key="8">
    <source>
    </source>
</evidence>
<evidence type="ECO:0000269" key="9">
    <source>
    </source>
</evidence>
<evidence type="ECO:0000303" key="10">
    <source>
    </source>
</evidence>
<evidence type="ECO:0000305" key="11"/>
<evidence type="ECO:0000305" key="12">
    <source>
    </source>
</evidence>
<evidence type="ECO:0000305" key="13">
    <source>
    </source>
</evidence>
<accession>W6Q4S4</accession>
<keyword id="KW-0325">Glycoprotein</keyword>
<keyword id="KW-0349">Heme</keyword>
<keyword id="KW-0408">Iron</keyword>
<keyword id="KW-0472">Membrane</keyword>
<keyword id="KW-0479">Metal-binding</keyword>
<keyword id="KW-0503">Monooxygenase</keyword>
<keyword id="KW-0560">Oxidoreductase</keyword>
<keyword id="KW-1185">Reference proteome</keyword>
<keyword id="KW-0812">Transmembrane</keyword>
<keyword id="KW-1133">Transmembrane helix</keyword>
<proteinExistence type="inferred from homology"/>
<reference key="1">
    <citation type="journal article" date="2014" name="Nat. Commun.">
        <title>Multiple recent horizontal transfers of a large genomic region in cheese making fungi.</title>
        <authorList>
            <person name="Cheeseman K."/>
            <person name="Ropars J."/>
            <person name="Renault P."/>
            <person name="Dupont J."/>
            <person name="Gouzy J."/>
            <person name="Branca A."/>
            <person name="Abraham A.-L."/>
            <person name="Ceppi M."/>
            <person name="Conseiller E."/>
            <person name="Debuchy R."/>
            <person name="Malagnac F."/>
            <person name="Goarin A."/>
            <person name="Silar P."/>
            <person name="Lacoste S."/>
            <person name="Sallet E."/>
            <person name="Bensimon A."/>
            <person name="Giraud T."/>
            <person name="Brygoo Y."/>
        </authorList>
    </citation>
    <scope>NUCLEOTIDE SEQUENCE [LARGE SCALE GENOMIC DNA]</scope>
    <source>
        <strain>FM164</strain>
    </source>
</reference>
<reference key="2">
    <citation type="journal article" date="1980" name="Appl. Environ. Microbiol.">
        <title>Production of eremofortins A, B, and C relative to formation of PR toxin by Penicillium roqueforti.</title>
        <authorList>
            <person name="Moreau S."/>
            <person name="Lablache-Combier A."/>
            <person name="Biguet J."/>
        </authorList>
    </citation>
    <scope>FUNCTION</scope>
</reference>
<reference key="3">
    <citation type="journal article" date="1993" name="J. Biol. Chem.">
        <title>Aristolochene synthase. Isolation, characterization, and bacterial expression of a sesquiterpenoid biosynthetic gene (Ari1) from Penicillium roqueforti.</title>
        <authorList>
            <person name="Proctor R.H."/>
            <person name="Hohn T.M."/>
        </authorList>
    </citation>
    <scope>FUNCTION</scope>
</reference>
<reference key="4">
    <citation type="journal article" date="2004" name="J. Am. Chem. Soc.">
        <title>Aristolochene synthase: mechanistic analysis of active site residues by site-directed mutagenesis.</title>
        <authorList>
            <person name="Felicetti B."/>
            <person name="Cane D.E."/>
        </authorList>
    </citation>
    <scope>FUNCTION</scope>
</reference>
<reference key="5">
    <citation type="journal article" date="2014" name="Fungal Genet. Biol.">
        <title>Molecular characterization of the PR-toxin gene cluster in Penicillium roqueforti and Penicillium chrysogenum: cross talk of secondary metabolite pathways.</title>
        <authorList>
            <person name="Hidalgo P.I."/>
            <person name="Ullan R.V."/>
            <person name="Albillos S.M."/>
            <person name="Montero O."/>
            <person name="Fernandez-Bodega M.A."/>
            <person name="Garcia-Estrada C."/>
            <person name="Fernandez-Aguado M."/>
            <person name="Martin J.F."/>
        </authorList>
    </citation>
    <scope>FUNCTION</scope>
</reference>
<reference key="6">
    <citation type="journal article" date="2015" name="Angew. Chem. Int. Ed.">
        <title>Identification of intermediates in the biosynthesis of PR toxin by Penicillium roqueforti.</title>
        <authorList>
            <person name="Riclea R."/>
            <person name="Dickschat J.S."/>
        </authorList>
    </citation>
    <scope>FUNCTION</scope>
</reference>
<reference key="7">
    <citation type="journal article" date="2017" name="Appl. Microbiol. Biotechnol.">
        <title>Penicillium roqueforti PR toxin gene cluster characterization.</title>
        <authorList>
            <person name="Hidalgo P.I."/>
            <person name="Poirier E."/>
            <person name="Ullan R.V."/>
            <person name="Piqueras J."/>
            <person name="Meslet-Cladiere L."/>
            <person name="Coton E."/>
            <person name="Coton M."/>
        </authorList>
    </citation>
    <scope>FUNCTION</scope>
    <scope>PATHWAY</scope>
</reference>
<organism>
    <name type="scientific">Penicillium roqueforti (strain FM164)</name>
    <dbReference type="NCBI Taxonomy" id="1365484"/>
    <lineage>
        <taxon>Eukaryota</taxon>
        <taxon>Fungi</taxon>
        <taxon>Dikarya</taxon>
        <taxon>Ascomycota</taxon>
        <taxon>Pezizomycotina</taxon>
        <taxon>Eurotiomycetes</taxon>
        <taxon>Eurotiomycetidae</taxon>
        <taxon>Eurotiales</taxon>
        <taxon>Aspergillaceae</taxon>
        <taxon>Penicillium</taxon>
    </lineage>
</organism>
<feature type="chain" id="PRO_0000451227" description="Cytochrome P450 monooxygenase ORF11">
    <location>
        <begin position="1"/>
        <end position="480"/>
    </location>
</feature>
<feature type="transmembrane region" description="Helical" evidence="2">
    <location>
        <begin position="9"/>
        <end position="29"/>
    </location>
</feature>
<feature type="binding site" description="axial binding residue" evidence="1">
    <location>
        <position position="449"/>
    </location>
    <ligand>
        <name>heme</name>
        <dbReference type="ChEBI" id="CHEBI:30413"/>
    </ligand>
    <ligandPart>
        <name>Fe</name>
        <dbReference type="ChEBI" id="CHEBI:18248"/>
    </ligandPart>
</feature>
<feature type="glycosylation site" description="N-linked (GlcNAc...) asparagine" evidence="3">
    <location>
        <position position="265"/>
    </location>
</feature>
<feature type="glycosylation site" description="N-linked (GlcNAc...) asparagine" evidence="3">
    <location>
        <position position="352"/>
    </location>
</feature>
<sequence length="480" mass="53913">MDALEAPELLLLPHLSALTPKTGFLIGLALAITAYCYYRHTQHPLYKFPGPRSAAWSNVLYCYYYIQGRQPFKLLELHNQYGSVVRTAPNDLSFNTAGAFRDIYNFRPGHETFIKSDWYDGGVFADKAHSIVSEREPGKHGHMRKYLSHAFSDKSLKAQEPLIDEVVNEFVSQLDVFGSKKGGIDIVVWFNLATFDIIGSLAFGESFGGVKSGEVHPWISRIITAIGQSALADAFKRFPKFATTFKWLFPKAIEKMLEDTAGHENYTISLIDKRLSNPSTRPDFLTRMLENRPEDLTDVQIAAHASDFVIAGSETTATTLSCIVYYLTKNPSVYQKATQEIRDRFERFEDINSTAASQLKYLHALALEAMRIYPPLPLALPRVVPKGGDTIDGHFVAEGTIVSVNPVAACLSTKNFDAPLEFRPERWLESDLVDDHEASQPFSMGPRACLGRNLAWIELSLLLSKMLWVYDIELLNTEVD</sequence>
<protein>
    <recommendedName>
        <fullName evidence="10">Cytochrome P450 monooxygenase ORF11</fullName>
        <ecNumber evidence="13">1.-.-.-</ecNumber>
    </recommendedName>
    <alternativeName>
        <fullName evidence="10">PR-toxin biosynthesis cluster protein 11</fullName>
    </alternativeName>
</protein>
<gene>
    <name evidence="10" type="primary">ORF11</name>
    <name type="ORF">PROQFM164_S02g001475</name>
</gene>